<organism>
    <name type="scientific">Leptosphaeria maculans (strain JN3 / isolate v23.1.3 / race Av1-4-5-6-7-8)</name>
    <name type="common">Blackleg fungus</name>
    <name type="synonym">Phoma lingam</name>
    <dbReference type="NCBI Taxonomy" id="985895"/>
    <lineage>
        <taxon>Eukaryota</taxon>
        <taxon>Fungi</taxon>
        <taxon>Dikarya</taxon>
        <taxon>Ascomycota</taxon>
        <taxon>Pezizomycotina</taxon>
        <taxon>Dothideomycetes</taxon>
        <taxon>Pleosporomycetidae</taxon>
        <taxon>Pleosporales</taxon>
        <taxon>Pleosporineae</taxon>
        <taxon>Leptosphaeriaceae</taxon>
        <taxon>Plenodomus</taxon>
        <taxon>Plenodomus lingam/Leptosphaeria maculans species complex</taxon>
    </lineage>
</organism>
<feature type="chain" id="PRO_0000407629" description="Methionine aminopeptidase 2-1">
    <location>
        <begin position="1"/>
        <end position="460"/>
    </location>
</feature>
<feature type="region of interest" description="Disordered" evidence="2">
    <location>
        <begin position="1"/>
        <end position="90"/>
    </location>
</feature>
<feature type="compositionally biased region" description="Low complexity" evidence="2">
    <location>
        <begin position="30"/>
        <end position="39"/>
    </location>
</feature>
<feature type="compositionally biased region" description="Acidic residues" evidence="2">
    <location>
        <begin position="42"/>
        <end position="52"/>
    </location>
</feature>
<feature type="compositionally biased region" description="Basic residues" evidence="2">
    <location>
        <begin position="69"/>
        <end position="81"/>
    </location>
</feature>
<feature type="binding site" evidence="1">
    <location>
        <position position="212"/>
    </location>
    <ligand>
        <name>substrate</name>
    </ligand>
</feature>
<feature type="binding site" evidence="1">
    <location>
        <position position="233"/>
    </location>
    <ligand>
        <name>a divalent metal cation</name>
        <dbReference type="ChEBI" id="CHEBI:60240"/>
        <label>1</label>
    </ligand>
</feature>
<feature type="binding site" evidence="1">
    <location>
        <position position="244"/>
    </location>
    <ligand>
        <name>a divalent metal cation</name>
        <dbReference type="ChEBI" id="CHEBI:60240"/>
        <label>1</label>
    </ligand>
</feature>
<feature type="binding site" evidence="1">
    <location>
        <position position="244"/>
    </location>
    <ligand>
        <name>a divalent metal cation</name>
        <dbReference type="ChEBI" id="CHEBI:60240"/>
        <label>2</label>
        <note>catalytic</note>
    </ligand>
</feature>
<feature type="binding site" evidence="1">
    <location>
        <position position="313"/>
    </location>
    <ligand>
        <name>a divalent metal cation</name>
        <dbReference type="ChEBI" id="CHEBI:60240"/>
        <label>2</label>
        <note>catalytic</note>
    </ligand>
</feature>
<feature type="binding site" evidence="1">
    <location>
        <position position="321"/>
    </location>
    <ligand>
        <name>substrate</name>
    </ligand>
</feature>
<feature type="binding site" evidence="1">
    <location>
        <position position="346"/>
    </location>
    <ligand>
        <name>a divalent metal cation</name>
        <dbReference type="ChEBI" id="CHEBI:60240"/>
        <label>2</label>
        <note>catalytic</note>
    </ligand>
</feature>
<feature type="binding site" evidence="1">
    <location>
        <position position="441"/>
    </location>
    <ligand>
        <name>a divalent metal cation</name>
        <dbReference type="ChEBI" id="CHEBI:60240"/>
        <label>1</label>
    </ligand>
</feature>
<feature type="binding site" evidence="1">
    <location>
        <position position="441"/>
    </location>
    <ligand>
        <name>a divalent metal cation</name>
        <dbReference type="ChEBI" id="CHEBI:60240"/>
        <label>2</label>
        <note>catalytic</note>
    </ligand>
</feature>
<keyword id="KW-0031">Aminopeptidase</keyword>
<keyword id="KW-0963">Cytoplasm</keyword>
<keyword id="KW-0378">Hydrolase</keyword>
<keyword id="KW-0479">Metal-binding</keyword>
<keyword id="KW-0645">Protease</keyword>
<keyword id="KW-1185">Reference proteome</keyword>
<gene>
    <name type="ORF">Lema_P106830</name>
</gene>
<dbReference type="EC" id="3.4.11.18" evidence="1"/>
<dbReference type="EMBL" id="FP929129">
    <property type="protein sequence ID" value="CBX96418.1"/>
    <property type="molecule type" value="Genomic_DNA"/>
</dbReference>
<dbReference type="RefSeq" id="XP_003839897.1">
    <property type="nucleotide sequence ID" value="XM_003839849.1"/>
</dbReference>
<dbReference type="SMR" id="E4ZYY3"/>
<dbReference type="FunCoup" id="E4ZYY3">
    <property type="interactions" value="1103"/>
</dbReference>
<dbReference type="STRING" id="985895.E4ZYY3"/>
<dbReference type="EnsemblFungi" id="CBX96418">
    <property type="protein sequence ID" value="CBX96418"/>
    <property type="gene ID" value="LEMA_P106830.1"/>
</dbReference>
<dbReference type="VEuPathDB" id="FungiDB:LEMA_P106830.1"/>
<dbReference type="eggNOG" id="KOG2775">
    <property type="taxonomic scope" value="Eukaryota"/>
</dbReference>
<dbReference type="HOGENOM" id="CLU_015857_7_1_1"/>
<dbReference type="InParanoid" id="E4ZYY3"/>
<dbReference type="OMA" id="ILRYHIH"/>
<dbReference type="OrthoDB" id="7848262at2759"/>
<dbReference type="Proteomes" id="UP000002668">
    <property type="component" value="Genome"/>
</dbReference>
<dbReference type="GO" id="GO:0005737">
    <property type="term" value="C:cytoplasm"/>
    <property type="evidence" value="ECO:0007669"/>
    <property type="project" value="UniProtKB-SubCell"/>
</dbReference>
<dbReference type="GO" id="GO:0004239">
    <property type="term" value="F:initiator methionyl aminopeptidase activity"/>
    <property type="evidence" value="ECO:0007669"/>
    <property type="project" value="UniProtKB-UniRule"/>
</dbReference>
<dbReference type="GO" id="GO:0046872">
    <property type="term" value="F:metal ion binding"/>
    <property type="evidence" value="ECO:0007669"/>
    <property type="project" value="UniProtKB-UniRule"/>
</dbReference>
<dbReference type="GO" id="GO:0070006">
    <property type="term" value="F:metalloaminopeptidase activity"/>
    <property type="evidence" value="ECO:0007669"/>
    <property type="project" value="UniProtKB-UniRule"/>
</dbReference>
<dbReference type="GO" id="GO:0006508">
    <property type="term" value="P:proteolysis"/>
    <property type="evidence" value="ECO:0007669"/>
    <property type="project" value="UniProtKB-KW"/>
</dbReference>
<dbReference type="CDD" id="cd01088">
    <property type="entry name" value="MetAP2"/>
    <property type="match status" value="1"/>
</dbReference>
<dbReference type="Gene3D" id="3.90.230.10">
    <property type="entry name" value="Creatinase/methionine aminopeptidase superfamily"/>
    <property type="match status" value="1"/>
</dbReference>
<dbReference type="Gene3D" id="1.10.10.10">
    <property type="entry name" value="Winged helix-like DNA-binding domain superfamily/Winged helix DNA-binding domain"/>
    <property type="match status" value="1"/>
</dbReference>
<dbReference type="HAMAP" id="MF_03175">
    <property type="entry name" value="MetAP_2_euk"/>
    <property type="match status" value="1"/>
</dbReference>
<dbReference type="InterPro" id="IPR036005">
    <property type="entry name" value="Creatinase/aminopeptidase-like"/>
</dbReference>
<dbReference type="InterPro" id="IPR050247">
    <property type="entry name" value="Met_Aminopeptidase_Type2"/>
</dbReference>
<dbReference type="InterPro" id="IPR000994">
    <property type="entry name" value="Pept_M24"/>
</dbReference>
<dbReference type="InterPro" id="IPR002468">
    <property type="entry name" value="Pept_M24A_MAP2"/>
</dbReference>
<dbReference type="InterPro" id="IPR036388">
    <property type="entry name" value="WH-like_DNA-bd_sf"/>
</dbReference>
<dbReference type="InterPro" id="IPR036390">
    <property type="entry name" value="WH_DNA-bd_sf"/>
</dbReference>
<dbReference type="NCBIfam" id="TIGR00501">
    <property type="entry name" value="met_pdase_II"/>
    <property type="match status" value="1"/>
</dbReference>
<dbReference type="PANTHER" id="PTHR45777">
    <property type="entry name" value="METHIONINE AMINOPEPTIDASE 2"/>
    <property type="match status" value="1"/>
</dbReference>
<dbReference type="PANTHER" id="PTHR45777:SF1">
    <property type="entry name" value="METHIONINE AMINOPEPTIDASE 2-2"/>
    <property type="match status" value="1"/>
</dbReference>
<dbReference type="Pfam" id="PF00557">
    <property type="entry name" value="Peptidase_M24"/>
    <property type="match status" value="1"/>
</dbReference>
<dbReference type="SUPFAM" id="SSF55920">
    <property type="entry name" value="Creatinase/aminopeptidase"/>
    <property type="match status" value="1"/>
</dbReference>
<dbReference type="SUPFAM" id="SSF46785">
    <property type="entry name" value="Winged helix' DNA-binding domain"/>
    <property type="match status" value="1"/>
</dbReference>
<name>MAP21_LEPMJ</name>
<proteinExistence type="inferred from homology"/>
<sequence length="460" mass="50338">MGSKSPNGEDRGPNGPSAKKAVASINPPKSAAASGLLRGALEDQDEDGDDDEGKIGADMNVSEKTANGTKKRRRNNKKKKSAQAAQQTAPPRVEIATLFHNRPYPEGEIVEYGINDENLVRTTDEEFRHLAVANNMNDEFLRDYRKAAEVHRQVRQYAQTIAKPGISMTELAREIEDGVRALVGHQGIETGDSLKAGMGFPTGLCINNVAAHWTPNPGAREVVLQHDDVLSIDFGVHVNGRIVDSAFTVAFNPMYDKLLTAVKAATNTGLKESGIDARMDYISETIQEVMESYEVMINGKPLPVKALSSLSGHNILRYKIHGDKQVPFVKTRTSQRMEEGDVFAIETFGSTGIGRTRDDVGVYGYSRNENVSTAGVHLASAKSLLKAIDENFGTLPFSRNYLERIGVKNYHLGMRSLIASGVVECYAPLVDTPGSYVAQFEHTVLLRPNCKEIISRGDDY</sequence>
<evidence type="ECO:0000255" key="1">
    <source>
        <dbReference type="HAMAP-Rule" id="MF_03175"/>
    </source>
</evidence>
<evidence type="ECO:0000256" key="2">
    <source>
        <dbReference type="SAM" id="MobiDB-lite"/>
    </source>
</evidence>
<reference key="1">
    <citation type="journal article" date="2011" name="Nat. Commun.">
        <title>Effector diversification within compartments of the Leptosphaeria maculans genome affected by Repeat-Induced Point mutations.</title>
        <authorList>
            <person name="Rouxel T."/>
            <person name="Grandaubert J."/>
            <person name="Hane J.K."/>
            <person name="Hoede C."/>
            <person name="van de Wouw A.P."/>
            <person name="Couloux A."/>
            <person name="Dominguez V."/>
            <person name="Anthouard V."/>
            <person name="Bally P."/>
            <person name="Bourras S."/>
            <person name="Cozijnsen A.J."/>
            <person name="Ciuffetti L.M."/>
            <person name="Degrave A."/>
            <person name="Dilmaghani A."/>
            <person name="Duret L."/>
            <person name="Fudal I."/>
            <person name="Goodwin S.B."/>
            <person name="Gout L."/>
            <person name="Glaser N."/>
            <person name="Linglin J."/>
            <person name="Kema G.H.J."/>
            <person name="Lapalu N."/>
            <person name="Lawrence C.B."/>
            <person name="May K."/>
            <person name="Meyer M."/>
            <person name="Ollivier B."/>
            <person name="Poulain J."/>
            <person name="Schoch C.L."/>
            <person name="Simon A."/>
            <person name="Spatafora J.W."/>
            <person name="Stachowiak A."/>
            <person name="Turgeon B.G."/>
            <person name="Tyler B.M."/>
            <person name="Vincent D."/>
            <person name="Weissenbach J."/>
            <person name="Amselem J."/>
            <person name="Quesneville H."/>
            <person name="Oliver R.P."/>
            <person name="Wincker P."/>
            <person name="Balesdent M.-H."/>
            <person name="Howlett B.J."/>
        </authorList>
    </citation>
    <scope>NUCLEOTIDE SEQUENCE [LARGE SCALE GENOMIC DNA]</scope>
    <source>
        <strain>JN3 / isolate v23.1.3 / race Av1-4-5-6-7-8</strain>
    </source>
</reference>
<comment type="function">
    <text evidence="1">Cotranslationally removes the N-terminal methionine from nascent proteins. The N-terminal methionine is often cleaved when the second residue in the primary sequence is small and uncharged (Met-Ala-, Cys, Gly, Pro, Ser, Thr, or Val).</text>
</comment>
<comment type="catalytic activity">
    <reaction evidence="1">
        <text>Release of N-terminal amino acids, preferentially methionine, from peptides and arylamides.</text>
        <dbReference type="EC" id="3.4.11.18"/>
    </reaction>
</comment>
<comment type="cofactor">
    <cofactor evidence="1">
        <name>Co(2+)</name>
        <dbReference type="ChEBI" id="CHEBI:48828"/>
    </cofactor>
    <cofactor evidence="1">
        <name>Zn(2+)</name>
        <dbReference type="ChEBI" id="CHEBI:29105"/>
    </cofactor>
    <cofactor evidence="1">
        <name>Mn(2+)</name>
        <dbReference type="ChEBI" id="CHEBI:29035"/>
    </cofactor>
    <cofactor evidence="1">
        <name>Fe(2+)</name>
        <dbReference type="ChEBI" id="CHEBI:29033"/>
    </cofactor>
    <text evidence="1">Binds 2 divalent metal cations per subunit. Has a high-affinity and a low affinity metal-binding site. The true nature of the physiological cofactor is under debate. The enzyme is active with cobalt, zinc, manganese or divalent iron ions. Most likely, methionine aminopeptidases function as mononuclear Fe(2+)-metalloproteases under physiological conditions, and the catalytically relevant metal-binding site has been assigned to the histidine-containing high-affinity site.</text>
</comment>
<comment type="subcellular location">
    <subcellularLocation>
        <location evidence="1">Cytoplasm</location>
    </subcellularLocation>
</comment>
<comment type="similarity">
    <text evidence="1">Belongs to the peptidase M24A family. Methionine aminopeptidase eukaryotic type 2 subfamily.</text>
</comment>
<protein>
    <recommendedName>
        <fullName evidence="1">Methionine aminopeptidase 2-1</fullName>
        <shortName evidence="1">MAP 2-1</shortName>
        <shortName evidence="1">MetAP 2-1</shortName>
        <ecNumber evidence="1">3.4.11.18</ecNumber>
    </recommendedName>
    <alternativeName>
        <fullName evidence="1">Peptidase M</fullName>
    </alternativeName>
</protein>
<accession>E4ZYY3</accession>